<accession>C0R2Q8</accession>
<dbReference type="EMBL" id="CP001391">
    <property type="protein sequence ID" value="ACN95200.1"/>
    <property type="molecule type" value="Genomic_DNA"/>
</dbReference>
<dbReference type="RefSeq" id="WP_010962555.1">
    <property type="nucleotide sequence ID" value="NZ_MKIF01000179.1"/>
</dbReference>
<dbReference type="SMR" id="C0R2Q8"/>
<dbReference type="STRING" id="66084.WRi_004020"/>
<dbReference type="GeneID" id="70035882"/>
<dbReference type="KEGG" id="wri:WRi_004020"/>
<dbReference type="HOGENOM" id="CLU_092403_0_0_5"/>
<dbReference type="Proteomes" id="UP000001293">
    <property type="component" value="Chromosome"/>
</dbReference>
<dbReference type="GO" id="GO:0015935">
    <property type="term" value="C:small ribosomal subunit"/>
    <property type="evidence" value="ECO:0007669"/>
    <property type="project" value="InterPro"/>
</dbReference>
<dbReference type="GO" id="GO:0019843">
    <property type="term" value="F:rRNA binding"/>
    <property type="evidence" value="ECO:0007669"/>
    <property type="project" value="UniProtKB-UniRule"/>
</dbReference>
<dbReference type="GO" id="GO:0003735">
    <property type="term" value="F:structural constituent of ribosome"/>
    <property type="evidence" value="ECO:0007669"/>
    <property type="project" value="InterPro"/>
</dbReference>
<dbReference type="GO" id="GO:0042274">
    <property type="term" value="P:ribosomal small subunit biogenesis"/>
    <property type="evidence" value="ECO:0007669"/>
    <property type="project" value="TreeGrafter"/>
</dbReference>
<dbReference type="GO" id="GO:0006412">
    <property type="term" value="P:translation"/>
    <property type="evidence" value="ECO:0007669"/>
    <property type="project" value="UniProtKB-UniRule"/>
</dbReference>
<dbReference type="CDD" id="cd00165">
    <property type="entry name" value="S4"/>
    <property type="match status" value="1"/>
</dbReference>
<dbReference type="FunFam" id="3.10.290.10:FF:000001">
    <property type="entry name" value="30S ribosomal protein S4"/>
    <property type="match status" value="1"/>
</dbReference>
<dbReference type="Gene3D" id="1.10.1050.10">
    <property type="entry name" value="Ribosomal Protein S4 Delta 41, Chain A, domain 1"/>
    <property type="match status" value="1"/>
</dbReference>
<dbReference type="Gene3D" id="3.10.290.10">
    <property type="entry name" value="RNA-binding S4 domain"/>
    <property type="match status" value="1"/>
</dbReference>
<dbReference type="HAMAP" id="MF_01306_B">
    <property type="entry name" value="Ribosomal_uS4_B"/>
    <property type="match status" value="1"/>
</dbReference>
<dbReference type="InterPro" id="IPR022801">
    <property type="entry name" value="Ribosomal_uS4"/>
</dbReference>
<dbReference type="InterPro" id="IPR005709">
    <property type="entry name" value="Ribosomal_uS4_bac-type"/>
</dbReference>
<dbReference type="InterPro" id="IPR001912">
    <property type="entry name" value="Ribosomal_uS4_N"/>
</dbReference>
<dbReference type="InterPro" id="IPR002942">
    <property type="entry name" value="S4_RNA-bd"/>
</dbReference>
<dbReference type="InterPro" id="IPR036986">
    <property type="entry name" value="S4_RNA-bd_sf"/>
</dbReference>
<dbReference type="NCBIfam" id="NF003717">
    <property type="entry name" value="PRK05327.1"/>
    <property type="match status" value="1"/>
</dbReference>
<dbReference type="NCBIfam" id="TIGR01017">
    <property type="entry name" value="rpsD_bact"/>
    <property type="match status" value="1"/>
</dbReference>
<dbReference type="PANTHER" id="PTHR11831">
    <property type="entry name" value="30S 40S RIBOSOMAL PROTEIN"/>
    <property type="match status" value="1"/>
</dbReference>
<dbReference type="PANTHER" id="PTHR11831:SF4">
    <property type="entry name" value="SMALL RIBOSOMAL SUBUNIT PROTEIN US4M"/>
    <property type="match status" value="1"/>
</dbReference>
<dbReference type="Pfam" id="PF00163">
    <property type="entry name" value="Ribosomal_S4"/>
    <property type="match status" value="1"/>
</dbReference>
<dbReference type="Pfam" id="PF01479">
    <property type="entry name" value="S4"/>
    <property type="match status" value="1"/>
</dbReference>
<dbReference type="SMART" id="SM01390">
    <property type="entry name" value="Ribosomal_S4"/>
    <property type="match status" value="1"/>
</dbReference>
<dbReference type="SMART" id="SM00363">
    <property type="entry name" value="S4"/>
    <property type="match status" value="1"/>
</dbReference>
<dbReference type="SUPFAM" id="SSF55174">
    <property type="entry name" value="Alpha-L RNA-binding motif"/>
    <property type="match status" value="1"/>
</dbReference>
<dbReference type="PROSITE" id="PS50889">
    <property type="entry name" value="S4"/>
    <property type="match status" value="1"/>
</dbReference>
<evidence type="ECO:0000255" key="1">
    <source>
        <dbReference type="HAMAP-Rule" id="MF_01306"/>
    </source>
</evidence>
<evidence type="ECO:0000305" key="2"/>
<feature type="chain" id="PRO_1000165437" description="Small ribosomal subunit protein uS4">
    <location>
        <begin position="1"/>
        <end position="204"/>
    </location>
</feature>
<feature type="domain" description="S4 RNA-binding" evidence="1">
    <location>
        <begin position="93"/>
        <end position="156"/>
    </location>
</feature>
<gene>
    <name evidence="1" type="primary">rpsD</name>
    <name type="ordered locus">WRi_004020</name>
</gene>
<name>RS4_WOLWR</name>
<protein>
    <recommendedName>
        <fullName evidence="1">Small ribosomal subunit protein uS4</fullName>
    </recommendedName>
    <alternativeName>
        <fullName evidence="2">30S ribosomal protein S4</fullName>
    </alternativeName>
</protein>
<organism>
    <name type="scientific">Wolbachia sp. subsp. Drosophila simulans (strain wRi)</name>
    <dbReference type="NCBI Taxonomy" id="66084"/>
    <lineage>
        <taxon>Bacteria</taxon>
        <taxon>Pseudomonadati</taxon>
        <taxon>Pseudomonadota</taxon>
        <taxon>Alphaproteobacteria</taxon>
        <taxon>Rickettsiales</taxon>
        <taxon>Anaplasmataceae</taxon>
        <taxon>Wolbachieae</taxon>
        <taxon>Wolbachia</taxon>
    </lineage>
</organism>
<comment type="function">
    <text evidence="1">One of the primary rRNA binding proteins, it binds directly to 16S rRNA where it nucleates assembly of the body of the 30S subunit.</text>
</comment>
<comment type="function">
    <text evidence="1">With S5 and S12 plays an important role in translational accuracy.</text>
</comment>
<comment type="subunit">
    <text evidence="1">Part of the 30S ribosomal subunit. Contacts protein S5. The interaction surface between S4 and S5 is involved in control of translational fidelity.</text>
</comment>
<comment type="similarity">
    <text evidence="1">Belongs to the universal ribosomal protein uS4 family.</text>
</comment>
<sequence>MTTVITRKYRISRRLGVNLWGRAKDPVNKRKYPPGQHGILGFKKLSDFGKQFAAHKKFKFYYAISSKQLRRTFLDAYNRKGYTADNFIGILESRLSSVLYHSGLVPTIYSAKQLISHKHVTVNDKVVNISSYRVKPGDIIKIRERAAKIPVVVEAEQKQERKAPDYLEADSKEHSVKYLRSPQYSEVPYSADMEVNLVVEFYSR</sequence>
<proteinExistence type="inferred from homology"/>
<reference key="1">
    <citation type="journal article" date="2009" name="Proc. Natl. Acad. Sci. U.S.A.">
        <title>The mosaic genome structure of the Wolbachia wRi strain infecting Drosophila simulans.</title>
        <authorList>
            <person name="Klasson L."/>
            <person name="Westberg J."/>
            <person name="Sapountzis P."/>
            <person name="Naeslund K."/>
            <person name="Lutnaes Y."/>
            <person name="Darby A.C."/>
            <person name="Veneti Z."/>
            <person name="Chen L."/>
            <person name="Braig H.R."/>
            <person name="Garrett R."/>
            <person name="Bourtzis K."/>
            <person name="Andersson S.G."/>
        </authorList>
    </citation>
    <scope>NUCLEOTIDE SEQUENCE [LARGE SCALE GENOMIC DNA]</scope>
    <source>
        <strain>wRi</strain>
    </source>
</reference>
<keyword id="KW-0687">Ribonucleoprotein</keyword>
<keyword id="KW-0689">Ribosomal protein</keyword>
<keyword id="KW-0694">RNA-binding</keyword>
<keyword id="KW-0699">rRNA-binding</keyword>